<organismHost>
    <name type="scientific">Bos taurus</name>
    <name type="common">Bovine</name>
    <dbReference type="NCBI Taxonomy" id="9913"/>
</organismHost>
<protein>
    <recommendedName>
        <fullName evidence="1">DNA helicase/primase complex-associated protein</fullName>
        <shortName evidence="1">HEPA</shortName>
    </recommendedName>
    <alternativeName>
        <fullName evidence="1">Primase-associated factor</fullName>
    </alternativeName>
</protein>
<evidence type="ECO:0000255" key="1">
    <source>
        <dbReference type="HAMAP-Rule" id="MF_04010"/>
    </source>
</evidence>
<dbReference type="EMBL" id="Z48053">
    <property type="protein sequence ID" value="CAA88125.1"/>
    <property type="molecule type" value="Genomic_DNA"/>
</dbReference>
<dbReference type="PIR" id="S61247">
    <property type="entry name" value="S61247"/>
</dbReference>
<dbReference type="GO" id="GO:0042025">
    <property type="term" value="C:host cell nucleus"/>
    <property type="evidence" value="ECO:0007669"/>
    <property type="project" value="UniProtKB-SubCell"/>
</dbReference>
<dbReference type="GO" id="GO:0006260">
    <property type="term" value="P:DNA replication"/>
    <property type="evidence" value="ECO:0007669"/>
    <property type="project" value="UniProtKB-KW"/>
</dbReference>
<dbReference type="GO" id="GO:0019079">
    <property type="term" value="P:viral genome replication"/>
    <property type="evidence" value="ECO:0007669"/>
    <property type="project" value="InterPro"/>
</dbReference>
<dbReference type="HAMAP" id="MF_04010">
    <property type="entry name" value="HSV_HEPA"/>
    <property type="match status" value="1"/>
</dbReference>
<dbReference type="InterPro" id="IPR004996">
    <property type="entry name" value="HSV_HEPA"/>
</dbReference>
<dbReference type="Pfam" id="PF03324">
    <property type="entry name" value="Herpes_HEPA"/>
    <property type="match status" value="1"/>
</dbReference>
<comment type="function">
    <text evidence="1">Component of the helicase/primase complex. Unwinds the DNA at the replication forks and generates single-stranded DNA for both leading and lagging strand synthesis. The primase synthesizes short RNA primers on the lagging strand that the polymerase presumably elongates using dNTPs. The primase-associated factor has no known catalytic activity in the complex and may serve to facilitate the formation of the replisome by directly interacting with the origin-binding protein and the polymerase.</text>
</comment>
<comment type="subunit">
    <text evidence="1">Associates with the primase and the helicase to form the helicase-primase complex. Interacts with the origin-binding protein. Interacts with the polymerase catalytic subunit.</text>
</comment>
<comment type="subcellular location">
    <subcellularLocation>
        <location evidence="1">Host nucleus</location>
    </subcellularLocation>
</comment>
<comment type="similarity">
    <text evidence="1">Belongs to the herpesviridae HEPA family.</text>
</comment>
<gene>
    <name type="primary">UL8</name>
</gene>
<accession>P52374</accession>
<sequence>MPVSHSNGCVCGVSLYSAWAAGPDRARVLLALLCRMDDGGCDAKFALVNVCARGVTALARGARDVTAARLEDLARAAAAPRALPLATLGHAATWKALYVSALAACARRLGPFAFIERRALEETTDTGLLVSAEEPPDAADAAPRAAVLRSALRLAVEEDAVRAAAAAAPAGGGSLARARLCAMRDGHADLSAPGNVVEFELTTKTARFYRIFADIAQPPRKRAGRLADVFAHREYRVRTEGSAAPVVVRALVPVNFDCVVADARAFSPMAAMLVFAQWHAALFTDGPAQVLGFLGPQLNPGGEERDYCFLLGFPGVPLVVSAADAGAVRDDLDAHVLTDGLWPAFGVHVYHALGPWNFLDGAAVASLNRRIAAARAALPPGGSDGSDWPAGRVSTILNSPARARGSGWPRFDFSAFFPTLYAHLVPENARLARAICARRDGRPGLKPSLLTFFGGLRHVHAPAYEAVIALANAVAAAVERAANARNFAVCTYVKDGFWGAFGDAAPEVVPREAALAAALALRDDCQRAAEAVLRAAGLHPAEGAELHLRFEGLFTHAVSWSANKYWLWDATAGGAEGELFVGFPCRTEFGRMAKRSLAGLLRRAVAQPERPSDTVAAAAAACDALVHAAFERRGDVRFWSATAPIADWGAVPRSALSGGDLLDADHGPRPYVLVAGHEAAPFPLPWGSLPLPVLLPDIACRAHMAPVLQELARMLNGALAALAAREGDDEPPIEEFEYNLADFDFLFA</sequence>
<feature type="chain" id="PRO_0000115858" description="DNA helicase/primase complex-associated protein">
    <location>
        <begin position="1"/>
        <end position="748"/>
    </location>
</feature>
<organism>
    <name type="scientific">Bovine herpesvirus 1.1 (strain Cooper)</name>
    <name type="common">BoHV-1</name>
    <name type="synonym">Infectious bovine rhinotracheitis virus</name>
    <dbReference type="NCBI Taxonomy" id="10323"/>
    <lineage>
        <taxon>Viruses</taxon>
        <taxon>Duplodnaviria</taxon>
        <taxon>Heunggongvirae</taxon>
        <taxon>Peploviricota</taxon>
        <taxon>Herviviricetes</taxon>
        <taxon>Herpesvirales</taxon>
        <taxon>Orthoherpesviridae</taxon>
        <taxon>Alphaherpesvirinae</taxon>
        <taxon>Varicellovirus</taxon>
        <taxon>Varicellovirus bovinealpha1</taxon>
    </lineage>
</organism>
<reference key="1">
    <citation type="journal article" date="1995" name="Virology">
        <title>Nucleotide sequence analysis of a 30-kb region of the bovine herpesvirus 1 genome which exhibits a colinear gene arrangement with the UL21 to UL4 genes of herpes simplex virus.</title>
        <authorList>
            <person name="Vlcek C."/>
            <person name="Benes V."/>
            <person name="Lu Z."/>
            <person name="Kutish G.F."/>
            <person name="Paces V."/>
            <person name="Rock D."/>
            <person name="Letchworth G.J."/>
            <person name="Schwyzer M."/>
        </authorList>
    </citation>
    <scope>NUCLEOTIDE SEQUENCE [GENOMIC DNA]</scope>
</reference>
<name>HEPA_BHV1C</name>
<keyword id="KW-0235">DNA replication</keyword>
<keyword id="KW-1048">Host nucleus</keyword>
<proteinExistence type="inferred from homology"/>